<reference key="1">
    <citation type="submission" date="2009-03" db="EMBL/GenBank/DDBJ databases">
        <title>Complete genome sequence of Edwardsiella ictaluri 93-146.</title>
        <authorList>
            <person name="Williams M.L."/>
            <person name="Gillaspy A.F."/>
            <person name="Dyer D.W."/>
            <person name="Thune R.L."/>
            <person name="Waldbieser G.C."/>
            <person name="Schuster S.C."/>
            <person name="Gipson J."/>
            <person name="Zaitshik J."/>
            <person name="Landry C."/>
            <person name="Lawrence M.L."/>
        </authorList>
    </citation>
    <scope>NUCLEOTIDE SEQUENCE [LARGE SCALE GENOMIC DNA]</scope>
    <source>
        <strain>93-146</strain>
    </source>
</reference>
<evidence type="ECO:0000255" key="1">
    <source>
        <dbReference type="HAMAP-Rule" id="MF_01359"/>
    </source>
</evidence>
<sequence length="598" mass="68866">MTDSTTHDREMSAWQTHDHLDDPVIGELRNRFGPEAFSVQPTRTGMPVVWVKREQLLEVMAFLRQLPKPYVMLFDLHGMDERLRTHRQGLPAADFSVFYHLISIDRNRDIMLKVALAEQDLHLPTVTRLFPNANWYERETFDLFGITFDGHPHLTRLLMPRTWQGHPLRKDYPARATEFDPFELTRQKQDLEMESLKFRPEEWGMQRGTANEDFMFLNLGPNHPSSHGAFRIVLQLDGEDIVDCVPDIGYHHRGAEKMGERQSWHSYIPYTDRIEYLGGCVNEMPYVLAVEKLAGIEVPERVKVIRVMLSELFRINSHLLYISTFIQDVGAMTPVFFAFTDRQKIYDIVEAVTGFRMHPAWFRIGGVAHDLPKGWDRLLREFLEWMPKRLDSYVKAALHNSILKGRSIGVAAYGAKDALAWGTTGAGLRATGIAFDVRKWRPYSGYENFEFEVPTASNGDCYDRVMLKVEEIRQSLRILQQCLKNMPEGPFKADHPLTTPPPKERTLQHIDTLINHFLQVSWGPVMPANESFQMVEATKGINSYYLTSDGGTMSYRTRIRTPSYAHLQQIPSVIRGCLVSDLIVYLGSIDFVMSDVDR</sequence>
<accession>C5B8I4</accession>
<keyword id="KW-0997">Cell inner membrane</keyword>
<keyword id="KW-1003">Cell membrane</keyword>
<keyword id="KW-0472">Membrane</keyword>
<keyword id="KW-0511">Multifunctional enzyme</keyword>
<keyword id="KW-0520">NAD</keyword>
<keyword id="KW-0874">Quinone</keyword>
<keyword id="KW-1278">Translocase</keyword>
<keyword id="KW-0813">Transport</keyword>
<keyword id="KW-0830">Ubiquinone</keyword>
<comment type="function">
    <text evidence="1">NDH-1 shuttles electrons from NADH, via FMN and iron-sulfur (Fe-S) centers, to quinones in the respiratory chain. The immediate electron acceptor for the enzyme in this species is believed to be ubiquinone. Couples the redox reaction to proton translocation (for every two electrons transferred, four hydrogen ions are translocated across the cytoplasmic membrane), and thus conserves the redox energy in a proton gradient.</text>
</comment>
<comment type="catalytic activity">
    <reaction evidence="1">
        <text>a quinone + NADH + 5 H(+)(in) = a quinol + NAD(+) + 4 H(+)(out)</text>
        <dbReference type="Rhea" id="RHEA:57888"/>
        <dbReference type="ChEBI" id="CHEBI:15378"/>
        <dbReference type="ChEBI" id="CHEBI:24646"/>
        <dbReference type="ChEBI" id="CHEBI:57540"/>
        <dbReference type="ChEBI" id="CHEBI:57945"/>
        <dbReference type="ChEBI" id="CHEBI:132124"/>
    </reaction>
</comment>
<comment type="subunit">
    <text evidence="1">NDH-1 is composed of 13 different subunits. Subunits NuoB, CD, E, F, and G constitute the peripheral sector of the complex.</text>
</comment>
<comment type="subcellular location">
    <subcellularLocation>
        <location evidence="1">Cell inner membrane</location>
        <topology evidence="1">Peripheral membrane protein</topology>
        <orientation evidence="1">Cytoplasmic side</orientation>
    </subcellularLocation>
</comment>
<comment type="similarity">
    <text evidence="1">In the N-terminal section; belongs to the complex I 30 kDa subunit family.</text>
</comment>
<comment type="similarity">
    <text evidence="1">In the C-terminal section; belongs to the complex I 49 kDa subunit family.</text>
</comment>
<gene>
    <name evidence="1" type="primary">nuoC</name>
    <name evidence="1" type="synonym">nuoCD</name>
    <name evidence="1" type="synonym">nuoD</name>
    <name type="ordered locus">NT01EI_2677</name>
</gene>
<dbReference type="EC" id="7.1.1.-" evidence="1"/>
<dbReference type="EMBL" id="CP001600">
    <property type="protein sequence ID" value="ACR69845.1"/>
    <property type="molecule type" value="Genomic_DNA"/>
</dbReference>
<dbReference type="RefSeq" id="WP_015871950.1">
    <property type="nucleotide sequence ID" value="NZ_CP169062.1"/>
</dbReference>
<dbReference type="SMR" id="C5B8I4"/>
<dbReference type="STRING" id="67780.B6E78_05385"/>
<dbReference type="GeneID" id="69539574"/>
<dbReference type="KEGG" id="eic:NT01EI_2677"/>
<dbReference type="PATRIC" id="fig|634503.3.peg.2392"/>
<dbReference type="HOGENOM" id="CLU_015134_3_2_6"/>
<dbReference type="OrthoDB" id="9801496at2"/>
<dbReference type="Proteomes" id="UP000001485">
    <property type="component" value="Chromosome"/>
</dbReference>
<dbReference type="GO" id="GO:0030964">
    <property type="term" value="C:NADH dehydrogenase complex"/>
    <property type="evidence" value="ECO:0007669"/>
    <property type="project" value="InterPro"/>
</dbReference>
<dbReference type="GO" id="GO:0005886">
    <property type="term" value="C:plasma membrane"/>
    <property type="evidence" value="ECO:0007669"/>
    <property type="project" value="UniProtKB-SubCell"/>
</dbReference>
<dbReference type="GO" id="GO:0051287">
    <property type="term" value="F:NAD binding"/>
    <property type="evidence" value="ECO:0007669"/>
    <property type="project" value="InterPro"/>
</dbReference>
<dbReference type="GO" id="GO:0008137">
    <property type="term" value="F:NADH dehydrogenase (ubiquinone) activity"/>
    <property type="evidence" value="ECO:0007669"/>
    <property type="project" value="InterPro"/>
</dbReference>
<dbReference type="GO" id="GO:0050136">
    <property type="term" value="F:NADH:ubiquinone reductase (non-electrogenic) activity"/>
    <property type="evidence" value="ECO:0007669"/>
    <property type="project" value="UniProtKB-UniRule"/>
</dbReference>
<dbReference type="GO" id="GO:0048038">
    <property type="term" value="F:quinone binding"/>
    <property type="evidence" value="ECO:0007669"/>
    <property type="project" value="UniProtKB-KW"/>
</dbReference>
<dbReference type="FunFam" id="1.10.645.10:FF:000001">
    <property type="entry name" value="NADH-quinone oxidoreductase subunit C/D"/>
    <property type="match status" value="1"/>
</dbReference>
<dbReference type="FunFam" id="3.30.460.80:FF:000001">
    <property type="entry name" value="NADH-quinone oxidoreductase subunit C/D"/>
    <property type="match status" value="1"/>
</dbReference>
<dbReference type="Gene3D" id="1.10.645.10">
    <property type="entry name" value="Cytochrome-c3 Hydrogenase, chain B"/>
    <property type="match status" value="1"/>
</dbReference>
<dbReference type="Gene3D" id="3.30.460.80">
    <property type="entry name" value="NADH:ubiquinone oxidoreductase, 30kDa subunit"/>
    <property type="match status" value="1"/>
</dbReference>
<dbReference type="HAMAP" id="MF_01357">
    <property type="entry name" value="NDH1_NuoC"/>
    <property type="match status" value="1"/>
</dbReference>
<dbReference type="HAMAP" id="MF_01359">
    <property type="entry name" value="NDH1_NuoCD_1"/>
    <property type="match status" value="1"/>
</dbReference>
<dbReference type="HAMAP" id="MF_01358">
    <property type="entry name" value="NDH1_NuoD"/>
    <property type="match status" value="1"/>
</dbReference>
<dbReference type="InterPro" id="IPR010218">
    <property type="entry name" value="NADH_DH_suC"/>
</dbReference>
<dbReference type="InterPro" id="IPR023062">
    <property type="entry name" value="NADH_DH_suCD"/>
</dbReference>
<dbReference type="InterPro" id="IPR001135">
    <property type="entry name" value="NADH_Q_OxRdtase_suD"/>
</dbReference>
<dbReference type="InterPro" id="IPR037232">
    <property type="entry name" value="NADH_quin_OxRdtase_su_C/D-like"/>
</dbReference>
<dbReference type="InterPro" id="IPR001268">
    <property type="entry name" value="NADH_UbQ_OxRdtase_30kDa_su"/>
</dbReference>
<dbReference type="InterPro" id="IPR014029">
    <property type="entry name" value="NADH_UbQ_OxRdtase_49kDa_CS"/>
</dbReference>
<dbReference type="InterPro" id="IPR022885">
    <property type="entry name" value="NDH1_su_D/H"/>
</dbReference>
<dbReference type="InterPro" id="IPR029014">
    <property type="entry name" value="NiFe-Hase_large"/>
</dbReference>
<dbReference type="NCBIfam" id="TIGR01961">
    <property type="entry name" value="NuoC_fam"/>
    <property type="match status" value="1"/>
</dbReference>
<dbReference type="NCBIfam" id="TIGR01962">
    <property type="entry name" value="NuoD"/>
    <property type="match status" value="1"/>
</dbReference>
<dbReference type="NCBIfam" id="NF004739">
    <property type="entry name" value="PRK06075.1"/>
    <property type="match status" value="1"/>
</dbReference>
<dbReference type="NCBIfam" id="NF008728">
    <property type="entry name" value="PRK11742.1"/>
    <property type="match status" value="1"/>
</dbReference>
<dbReference type="PANTHER" id="PTHR11993:SF45">
    <property type="entry name" value="NADH-QUINONE OXIDOREDUCTASE SUBUNIT C_D"/>
    <property type="match status" value="1"/>
</dbReference>
<dbReference type="PANTHER" id="PTHR11993">
    <property type="entry name" value="NADH-UBIQUINONE OXIDOREDUCTASE 49 KDA SUBUNIT"/>
    <property type="match status" value="1"/>
</dbReference>
<dbReference type="Pfam" id="PF00329">
    <property type="entry name" value="Complex1_30kDa"/>
    <property type="match status" value="1"/>
</dbReference>
<dbReference type="Pfam" id="PF00346">
    <property type="entry name" value="Complex1_49kDa"/>
    <property type="match status" value="1"/>
</dbReference>
<dbReference type="SUPFAM" id="SSF56762">
    <property type="entry name" value="HydB/Nqo4-like"/>
    <property type="match status" value="1"/>
</dbReference>
<dbReference type="SUPFAM" id="SSF143243">
    <property type="entry name" value="Nqo5-like"/>
    <property type="match status" value="1"/>
</dbReference>
<dbReference type="PROSITE" id="PS00535">
    <property type="entry name" value="COMPLEX1_49K"/>
    <property type="match status" value="1"/>
</dbReference>
<name>NUOCD_EDWI9</name>
<protein>
    <recommendedName>
        <fullName evidence="1">NADH-quinone oxidoreductase subunit C/D</fullName>
        <ecNumber evidence="1">7.1.1.-</ecNumber>
    </recommendedName>
    <alternativeName>
        <fullName evidence="1">NADH dehydrogenase I subunit C/D</fullName>
    </alternativeName>
    <alternativeName>
        <fullName evidence="1">NDH-1 subunit C/D</fullName>
    </alternativeName>
</protein>
<feature type="chain" id="PRO_1000214870" description="NADH-quinone oxidoreductase subunit C/D">
    <location>
        <begin position="1"/>
        <end position="598"/>
    </location>
</feature>
<feature type="region of interest" description="NADH dehydrogenase I subunit C" evidence="1">
    <location>
        <begin position="1"/>
        <end position="189"/>
    </location>
</feature>
<feature type="region of interest" description="NADH dehydrogenase I subunit D" evidence="1">
    <location>
        <begin position="213"/>
        <end position="598"/>
    </location>
</feature>
<proteinExistence type="inferred from homology"/>
<organism>
    <name type="scientific">Edwardsiella ictaluri (strain 93-146)</name>
    <dbReference type="NCBI Taxonomy" id="634503"/>
    <lineage>
        <taxon>Bacteria</taxon>
        <taxon>Pseudomonadati</taxon>
        <taxon>Pseudomonadota</taxon>
        <taxon>Gammaproteobacteria</taxon>
        <taxon>Enterobacterales</taxon>
        <taxon>Hafniaceae</taxon>
        <taxon>Edwardsiella</taxon>
    </lineage>
</organism>